<sequence length="94" mass="10315">MLKLNLQFFASKKGVSSTKNGRDSESKRLGAKRADGQFVTGGSILYRQRGTKIYPGENVGRGGDDTLFAKIDGVVKFERKGRDKKQVSVYAVAE</sequence>
<comment type="PTM">
    <text evidence="1">The N-terminus is cleaved by ribosomal processing cysteine protease Prp.</text>
</comment>
<comment type="similarity">
    <text evidence="2">Belongs to the bacterial ribosomal protein bL27 family.</text>
</comment>
<reference key="1">
    <citation type="journal article" date="2007" name="BMC Microbiol.">
        <title>Subtle genetic changes enhance virulence of methicillin resistant and sensitive Staphylococcus aureus.</title>
        <authorList>
            <person name="Highlander S.K."/>
            <person name="Hulten K.G."/>
            <person name="Qin X."/>
            <person name="Jiang H."/>
            <person name="Yerrapragada S."/>
            <person name="Mason E.O. Jr."/>
            <person name="Shang Y."/>
            <person name="Williams T.M."/>
            <person name="Fortunov R.M."/>
            <person name="Liu Y."/>
            <person name="Igboeli O."/>
            <person name="Petrosino J."/>
            <person name="Tirumalai M."/>
            <person name="Uzman A."/>
            <person name="Fox G.E."/>
            <person name="Cardenas A.M."/>
            <person name="Muzny D.M."/>
            <person name="Hemphill L."/>
            <person name="Ding Y."/>
            <person name="Dugan S."/>
            <person name="Blyth P.R."/>
            <person name="Buhay C.J."/>
            <person name="Dinh H.H."/>
            <person name="Hawes A.C."/>
            <person name="Holder M."/>
            <person name="Kovar C.L."/>
            <person name="Lee S.L."/>
            <person name="Liu W."/>
            <person name="Nazareth L.V."/>
            <person name="Wang Q."/>
            <person name="Zhou J."/>
            <person name="Kaplan S.L."/>
            <person name="Weinstock G.M."/>
        </authorList>
    </citation>
    <scope>NUCLEOTIDE SEQUENCE [LARGE SCALE GENOMIC DNA]</scope>
    <source>
        <strain>USA300 / TCH1516</strain>
    </source>
</reference>
<gene>
    <name evidence="2" type="primary">rpmA</name>
    <name type="ordered locus">USA300HOU_1644</name>
</gene>
<evidence type="ECO:0000250" key="1">
    <source>
        <dbReference type="UniProtKB" id="Q2FXT0"/>
    </source>
</evidence>
<evidence type="ECO:0000255" key="2">
    <source>
        <dbReference type="HAMAP-Rule" id="MF_00539"/>
    </source>
</evidence>
<evidence type="ECO:0000305" key="3"/>
<proteinExistence type="inferred from homology"/>
<feature type="propeptide" id="PRO_0000459938" evidence="1">
    <location>
        <begin position="1"/>
        <end position="9"/>
    </location>
</feature>
<feature type="chain" id="PRO_1000081917" description="Large ribosomal subunit protein bL27">
    <location>
        <begin position="10"/>
        <end position="94"/>
    </location>
</feature>
<organism>
    <name type="scientific">Staphylococcus aureus (strain USA300 / TCH1516)</name>
    <dbReference type="NCBI Taxonomy" id="451516"/>
    <lineage>
        <taxon>Bacteria</taxon>
        <taxon>Bacillati</taxon>
        <taxon>Bacillota</taxon>
        <taxon>Bacilli</taxon>
        <taxon>Bacillales</taxon>
        <taxon>Staphylococcaceae</taxon>
        <taxon>Staphylococcus</taxon>
    </lineage>
</organism>
<keyword id="KW-0687">Ribonucleoprotein</keyword>
<keyword id="KW-0689">Ribosomal protein</keyword>
<accession>A8Z2H3</accession>
<dbReference type="EMBL" id="CP000730">
    <property type="protein sequence ID" value="ABX29651.1"/>
    <property type="molecule type" value="Genomic_DNA"/>
</dbReference>
<dbReference type="RefSeq" id="WP_000916187.1">
    <property type="nucleotide sequence ID" value="NC_010079.1"/>
</dbReference>
<dbReference type="SMR" id="A8Z2H3"/>
<dbReference type="GeneID" id="98346013"/>
<dbReference type="KEGG" id="sax:USA300HOU_1644"/>
<dbReference type="HOGENOM" id="CLU_095424_4_0_9"/>
<dbReference type="GO" id="GO:0022625">
    <property type="term" value="C:cytosolic large ribosomal subunit"/>
    <property type="evidence" value="ECO:0007669"/>
    <property type="project" value="TreeGrafter"/>
</dbReference>
<dbReference type="GO" id="GO:0003735">
    <property type="term" value="F:structural constituent of ribosome"/>
    <property type="evidence" value="ECO:0007669"/>
    <property type="project" value="InterPro"/>
</dbReference>
<dbReference type="GO" id="GO:0006412">
    <property type="term" value="P:translation"/>
    <property type="evidence" value="ECO:0007669"/>
    <property type="project" value="UniProtKB-UniRule"/>
</dbReference>
<dbReference type="FunFam" id="2.40.50.100:FF:000004">
    <property type="entry name" value="50S ribosomal protein L27"/>
    <property type="match status" value="1"/>
</dbReference>
<dbReference type="Gene3D" id="2.40.50.100">
    <property type="match status" value="1"/>
</dbReference>
<dbReference type="HAMAP" id="MF_00539">
    <property type="entry name" value="Ribosomal_bL27"/>
    <property type="match status" value="1"/>
</dbReference>
<dbReference type="InterPro" id="IPR001684">
    <property type="entry name" value="Ribosomal_bL27"/>
</dbReference>
<dbReference type="InterPro" id="IPR018261">
    <property type="entry name" value="Ribosomal_bL27_CS"/>
</dbReference>
<dbReference type="NCBIfam" id="TIGR00062">
    <property type="entry name" value="L27"/>
    <property type="match status" value="1"/>
</dbReference>
<dbReference type="PANTHER" id="PTHR15893:SF0">
    <property type="entry name" value="LARGE RIBOSOMAL SUBUNIT PROTEIN BL27M"/>
    <property type="match status" value="1"/>
</dbReference>
<dbReference type="PANTHER" id="PTHR15893">
    <property type="entry name" value="RIBOSOMAL PROTEIN L27"/>
    <property type="match status" value="1"/>
</dbReference>
<dbReference type="Pfam" id="PF01016">
    <property type="entry name" value="Ribosomal_L27"/>
    <property type="match status" value="1"/>
</dbReference>
<dbReference type="PRINTS" id="PR00063">
    <property type="entry name" value="RIBOSOMALL27"/>
</dbReference>
<dbReference type="SUPFAM" id="SSF110324">
    <property type="entry name" value="Ribosomal L27 protein-like"/>
    <property type="match status" value="1"/>
</dbReference>
<dbReference type="PROSITE" id="PS00831">
    <property type="entry name" value="RIBOSOMAL_L27"/>
    <property type="match status" value="1"/>
</dbReference>
<protein>
    <recommendedName>
        <fullName evidence="2">Large ribosomal subunit protein bL27</fullName>
    </recommendedName>
    <alternativeName>
        <fullName evidence="3">50S ribosomal protein L27</fullName>
    </alternativeName>
</protein>
<name>RL27_STAAT</name>